<reference evidence="6" key="1">
    <citation type="submission" date="2012-12" db="EMBL/GenBank/DDBJ databases">
        <title>De novo Ixodes ricinus salivary transcriptome analysis using two different next generation sequencing methodologies.</title>
        <authorList>
            <person name="Schwarz A."/>
            <person name="von Reumont B.M."/>
            <person name="Erhart J."/>
            <person name="Chagas A.C."/>
            <person name="Ribeiro J.M.C."/>
            <person name="Kotsyfakis M."/>
        </authorList>
    </citation>
    <scope>NUCLEOTIDE SEQUENCE [LARGE SCALE MRNA]</scope>
    <source>
        <tissue evidence="6">Salivary gland</tissue>
    </source>
</reference>
<reference evidence="7" key="2">
    <citation type="journal article" date="2021" name="Front. Immunol.">
        <title>Iripin-3, a New Salivary Protein Isolated From Ixodes ricinus Ticks, Displays Immunomodulatory and Anti-Hemostatic Properties In Vitro.</title>
        <authorList>
            <person name="Chlastakova A."/>
            <person name="Kotal J."/>
            <person name="Berankova Z."/>
            <person name="Kascakova B."/>
            <person name="Martins L.A."/>
            <person name="Langhansova H."/>
            <person name="Prudnikova T."/>
            <person name="Ederova M."/>
            <person name="Kuta Smatanova I."/>
            <person name="Kotsyfakis M."/>
            <person name="Chmelar J."/>
        </authorList>
    </citation>
    <scope>X-RAY CRYSTALLOGRAPHY (1.95 ANGSTROMS) OF 1-355 AND 363-393</scope>
    <scope>FUNCTION</scope>
    <scope>INTERACTION WITH HUMAN KLKB1; ST14 AND F2</scope>
    <scope>SUBCELLULAR LOCATION</scope>
    <scope>TISSUE SPECIFICITY</scope>
    <scope>DEVELOPMENTAL STAGE</scope>
    <scope>INDUCTION BY BLOOD FEEDING</scope>
    <scope>DISRUPTION PHENOTYPE</scope>
</reference>
<dbReference type="EMBL" id="GADI01004776">
    <property type="protein sequence ID" value="JAA69032.1"/>
    <property type="molecule type" value="mRNA"/>
</dbReference>
<dbReference type="PDB" id="7AHP">
    <property type="method" value="X-ray"/>
    <property type="resolution" value="1.95 A"/>
    <property type="chains" value="A=1-355, aa=363-393"/>
</dbReference>
<dbReference type="PDBsum" id="7AHP"/>
<dbReference type="SMR" id="A0A0K8RCY5"/>
<dbReference type="GO" id="GO:0005615">
    <property type="term" value="C:extracellular space"/>
    <property type="evidence" value="ECO:0007669"/>
    <property type="project" value="InterPro"/>
</dbReference>
<dbReference type="GO" id="GO:0004867">
    <property type="term" value="F:serine-type endopeptidase inhibitor activity"/>
    <property type="evidence" value="ECO:0007669"/>
    <property type="project" value="UniProtKB-KW"/>
</dbReference>
<dbReference type="GO" id="GO:0090729">
    <property type="term" value="F:toxin activity"/>
    <property type="evidence" value="ECO:0007669"/>
    <property type="project" value="UniProtKB-KW"/>
</dbReference>
<dbReference type="GO" id="GO:0002376">
    <property type="term" value="P:immune system process"/>
    <property type="evidence" value="ECO:0007669"/>
    <property type="project" value="UniProtKB-KW"/>
</dbReference>
<dbReference type="CDD" id="cd19577">
    <property type="entry name" value="serpinJ_IRS-2-like"/>
    <property type="match status" value="1"/>
</dbReference>
<dbReference type="FunFam" id="3.30.497.10:FF:000031">
    <property type="entry name" value="Putative salivary serpin"/>
    <property type="match status" value="1"/>
</dbReference>
<dbReference type="FunFam" id="2.30.39.10:FF:000083">
    <property type="entry name" value="Serpin-2 precursor, putative"/>
    <property type="match status" value="1"/>
</dbReference>
<dbReference type="Gene3D" id="2.30.39.10">
    <property type="entry name" value="Alpha-1-antitrypsin, domain 1"/>
    <property type="match status" value="1"/>
</dbReference>
<dbReference type="Gene3D" id="3.30.497.10">
    <property type="entry name" value="Antithrombin, subunit I, domain 2"/>
    <property type="match status" value="1"/>
</dbReference>
<dbReference type="InterPro" id="IPR023795">
    <property type="entry name" value="Serpin_CS"/>
</dbReference>
<dbReference type="InterPro" id="IPR023796">
    <property type="entry name" value="Serpin_dom"/>
</dbReference>
<dbReference type="InterPro" id="IPR000215">
    <property type="entry name" value="Serpin_fam"/>
</dbReference>
<dbReference type="InterPro" id="IPR036186">
    <property type="entry name" value="Serpin_sf"/>
</dbReference>
<dbReference type="InterPro" id="IPR042178">
    <property type="entry name" value="Serpin_sf_1"/>
</dbReference>
<dbReference type="InterPro" id="IPR042185">
    <property type="entry name" value="Serpin_sf_2"/>
</dbReference>
<dbReference type="PANTHER" id="PTHR11461:SF211">
    <property type="entry name" value="GH10112P-RELATED"/>
    <property type="match status" value="1"/>
</dbReference>
<dbReference type="PANTHER" id="PTHR11461">
    <property type="entry name" value="SERINE PROTEASE INHIBITOR, SERPIN"/>
    <property type="match status" value="1"/>
</dbReference>
<dbReference type="Pfam" id="PF00079">
    <property type="entry name" value="Serpin"/>
    <property type="match status" value="1"/>
</dbReference>
<dbReference type="SMART" id="SM00093">
    <property type="entry name" value="SERPIN"/>
    <property type="match status" value="1"/>
</dbReference>
<dbReference type="SUPFAM" id="SSF56574">
    <property type="entry name" value="Serpins"/>
    <property type="match status" value="1"/>
</dbReference>
<dbReference type="PROSITE" id="PS00284">
    <property type="entry name" value="SERPIN"/>
    <property type="match status" value="1"/>
</dbReference>
<evidence type="ECO:0000255" key="1"/>
<evidence type="ECO:0000255" key="2">
    <source>
        <dbReference type="PROSITE-ProRule" id="PRU00498"/>
    </source>
</evidence>
<evidence type="ECO:0000269" key="3">
    <source>
    </source>
</evidence>
<evidence type="ECO:0000303" key="4">
    <source>
    </source>
</evidence>
<evidence type="ECO:0000305" key="5"/>
<evidence type="ECO:0000312" key="6">
    <source>
        <dbReference type="EMBL" id="JAA69032.1"/>
    </source>
</evidence>
<evidence type="ECO:0007744" key="7">
    <source>
        <dbReference type="PDB" id="7AHP"/>
    </source>
</evidence>
<sequence>MKVITAFLSVFVLCSAEDDDKLTVASNDLGMRMLPLLPSSPGENIFFSPYSLSIAMGMAYAGAGGETRQELHENLGYSRAGLPEAEVLDAYARQTQRHLSDPSNTTVDVANTAAIHLGLPLLDEYETILRNSFNADLQKVDFVENGQGAVDVINSWVKDKTHNKIESLFSEPLDPLTRFVLLNAMYFKGTWKTEFQKRRTEQRSFFNGGVTQAQVDTMIGKIRIRHNSFNDVGVDVAELPYRGGDYSMVILLPQEKTGVEALKTNLTAGLFKTLLDRLVQRQVTVFLPKFKFESKYSLKEILQNMGIRRIFGGGADLSGISGDTSLEVYDVVQKAVVEVNEEGTEAAVVSAVIGGLRSGSFDGFEFRVDHPFLFFIRDTRTNAILFVGQVNHL</sequence>
<proteinExistence type="evidence at protein level"/>
<organism evidence="6">
    <name type="scientific">Ixodes ricinus</name>
    <name type="common">Common tick</name>
    <name type="synonym">Acarus ricinus</name>
    <dbReference type="NCBI Taxonomy" id="34613"/>
    <lineage>
        <taxon>Eukaryota</taxon>
        <taxon>Metazoa</taxon>
        <taxon>Ecdysozoa</taxon>
        <taxon>Arthropoda</taxon>
        <taxon>Chelicerata</taxon>
        <taxon>Arachnida</taxon>
        <taxon>Acari</taxon>
        <taxon>Parasitiformes</taxon>
        <taxon>Ixodida</taxon>
        <taxon>Ixodoidea</taxon>
        <taxon>Ixodidae</taxon>
        <taxon>Ixodinae</taxon>
        <taxon>Ixodes</taxon>
    </lineage>
</organism>
<accession>A0A0K8RCY5</accession>
<protein>
    <recommendedName>
        <fullName evidence="4">Iripin-3</fullName>
    </recommendedName>
</protein>
<name>IRS3_IXORI</name>
<comment type="function">
    <text evidence="3">Serine protease inhibitor that modulates blood feeding of ticks on vertebrate species (PubMed:33732248). Moderately inhibits host plasma kallikrein (KLKB1), matriptase (ST14), trypsin, plasmin (PLG), thrombin (F2) and coagulation factor VIIa (F7) (PubMed:33732248). Slightly inhibits host alpha-chymotrypsin, tPA/tissue-type plasminogen activator (PLAT), uPA/urokinase-type plasminogen activator (PLAU) and coagulation factor XIIa (F12) (PubMed:33732248). Slightly inhibits the extrinsic pathway while not affecting the intrinsic and common pathways of host blood coagulation (PubMed:33732248). Decreases synthesis and secretion of IL6 by mouse bone marrow-derived macrophages (PubMed:33732248). Decreases viability of mouse B- and T-cells (PubMed:33732248). Decreases proliferation of mouse CD4+ T-cells in response to stimulation (PubMed:33732248). Inhibits Th1 immune responses in mouse cells (PubMed:33732248). Promotes differentiation of mouse regulatory T-cells (PubMed:33732248).</text>
</comment>
<comment type="subunit">
    <text evidence="3">Interacts with human KLKB1 (PubMed:33732248). Interacts with human ST14 (PubMed:33732248). Interacts with human F2 (thrombin) (PubMed:33732248).</text>
</comment>
<comment type="subcellular location">
    <subcellularLocation>
        <location evidence="3">Secreted</location>
    </subcellularLocation>
</comment>
<comment type="tissue specificity">
    <text evidence="3">Saliva (at protein level) (PubMed:33732248). Expressed in salivary gland (PubMed:33732248). Expressed in ovary during blood feeding (PubMed:33732248).</text>
</comment>
<comment type="developmental stage">
    <text evidence="3">Expressed in nymphs.</text>
</comment>
<comment type="induction">
    <text evidence="3">Induced by blood feeding in nymphs and in the salivary glands and ovaries of adult females.</text>
</comment>
<comment type="disruption phenotype">
    <text evidence="3">RNAi-mediated knockdown does not affect time course of blood feeding, feeding success and weight of fully engorged nymphs.</text>
</comment>
<comment type="similarity">
    <text evidence="5">Belongs to the serpin family.</text>
</comment>
<feature type="signal peptide" evidence="1">
    <location>
        <begin position="1"/>
        <end position="16"/>
    </location>
</feature>
<feature type="chain" id="PRO_5005516923" description="Iripin-3" evidence="1">
    <location>
        <begin position="17"/>
        <end position="393"/>
    </location>
</feature>
<feature type="glycosylation site" description="N-linked (GlcNAc...) asparagine" evidence="2">
    <location>
        <position position="104"/>
    </location>
</feature>
<feature type="glycosylation site" description="N-linked (GlcNAc...) asparagine" evidence="2">
    <location>
        <position position="265"/>
    </location>
</feature>
<keyword id="KW-0002">3D-structure</keyword>
<keyword id="KW-1203">Blood coagulation cascade inhibiting toxin</keyword>
<keyword id="KW-0325">Glycoprotein</keyword>
<keyword id="KW-1199">Hemostasis impairing toxin</keyword>
<keyword id="KW-0391">Immunity</keyword>
<keyword id="KW-0646">Protease inhibitor</keyword>
<keyword id="KW-0964">Secreted</keyword>
<keyword id="KW-0722">Serine protease inhibitor</keyword>
<keyword id="KW-0732">Signal</keyword>
<keyword id="KW-0800">Toxin</keyword>